<keyword id="KW-0001">2Fe-2S</keyword>
<keyword id="KW-0004">4Fe-4S</keyword>
<keyword id="KW-0408">Iron</keyword>
<keyword id="KW-0411">Iron-sulfur</keyword>
<keyword id="KW-0479">Metal-binding</keyword>
<keyword id="KW-0520">NAD</keyword>
<keyword id="KW-0874">Quinone</keyword>
<keyword id="KW-1185">Reference proteome</keyword>
<keyword id="KW-1278">Translocase</keyword>
<gene>
    <name type="primary">nuoG</name>
    <name type="ordered locus">bbp_148</name>
</gene>
<sequence length="907" mass="103415">MTIIFVDNEEYNVDKSDNLLQACLSSGINIPYFCWHPVLGSIGSCRQCAVTIYKDLEDKVGQLVMSCMTSVLDGMIVSTSDKISRNFRKGIIELLMLNHPHDCPICEEGGSCHLQDMTVMAGHTVRRYRFTKRTHKNQYLGHFITHEMNRCISCYRCVRYYKDYSGGTDLGVFGISNNVYFGRYNDGCLESEFSGNLVEVCPTGVFTDKTYSKKYSRKWDMQYAPSICQHCCVGCNISVGEKYGKISRIENRYHNAINHYFLCDLGRFSYDYSNVDERLTYSIYRSQNKTKIINDVNKTIDKLAMKFKKSSKIIGIGSCRASVESNFSLQKLVGSENFYLGISQKEYDCLMLIKDILKDNQIHVPTLREIEKSDVIFLLGEDVTKTSPLIALSIRQSIKGQVKTQDVSKNIPIWHADAVKNSFRNNKNKLFITNLMNSSLDDIADESYYASTFDQVLLGAEVYKCISNNCISNVTLLKQDLLSCAKRIATALTLSKCPLIISGSHSYNLDLIKVSFNIAKSLKVIGKNVGLILLSSNVNSIGVSLLEGISIEKVINKVLLKQIDKIIVLENDLYRYLPESIVDTLFKSSSCTVVIDHLNTRTLKQADIAIPTCNSFESSGTVVNYEGRAQRFFKTYHPNSSENKKSILESWKWLHLLYCKLHKISVFWHSLDDVIEEISLKIFSFSKLKDVAPNSSFKIFGQKLARSHHRASGRTALYSNINIHEPRPPQDNDTMFSFSMEGCQNVQNYLPYVPFSWFPGWNSVQSWNTYKKINNENYGKHLFQDTTKFVLTYYKLNCKNVNKIEDLYLIVPCYFLFCNNELAQYSPVIQENVLKNAYGIINTEDAKVLLIESGSKIEFSYLNKNFSIKVQLSKEFKKGQLGLPLGMADFPFFLAEKQVKVFRKISI</sequence>
<evidence type="ECO:0000250" key="1"/>
<evidence type="ECO:0000255" key="2"/>
<evidence type="ECO:0000255" key="3">
    <source>
        <dbReference type="PROSITE-ProRule" id="PRU00465"/>
    </source>
</evidence>
<evidence type="ECO:0000255" key="4">
    <source>
        <dbReference type="PROSITE-ProRule" id="PRU01004"/>
    </source>
</evidence>
<evidence type="ECO:0000255" key="5">
    <source>
        <dbReference type="PROSITE-ProRule" id="PRU01184"/>
    </source>
</evidence>
<evidence type="ECO:0000305" key="6"/>
<comment type="function">
    <text evidence="1">NDH-1 shuttles electrons from NADH, via FMN and iron-sulfur (Fe-S) centers, to quinones in the respiratory chain. Couples the redox reaction to proton translocation (for every two electrons transferred, four hydrogen ions are translocated across the cytoplasmic membrane), and thus conserves the redox energy in a proton gradient (By similarity).</text>
</comment>
<comment type="catalytic activity">
    <reaction>
        <text>a quinone + NADH + 5 H(+)(in) = a quinol + NAD(+) + 4 H(+)(out)</text>
        <dbReference type="Rhea" id="RHEA:57888"/>
        <dbReference type="ChEBI" id="CHEBI:15378"/>
        <dbReference type="ChEBI" id="CHEBI:24646"/>
        <dbReference type="ChEBI" id="CHEBI:57540"/>
        <dbReference type="ChEBI" id="CHEBI:57945"/>
        <dbReference type="ChEBI" id="CHEBI:132124"/>
    </reaction>
</comment>
<comment type="cofactor">
    <cofactor evidence="1">
        <name>[2Fe-2S] cluster</name>
        <dbReference type="ChEBI" id="CHEBI:190135"/>
    </cofactor>
    <text evidence="1">Binds 1 [2Fe-2S] cluster per subunit.</text>
</comment>
<comment type="cofactor">
    <cofactor evidence="1">
        <name>[4Fe-4S] cluster</name>
        <dbReference type="ChEBI" id="CHEBI:49883"/>
    </cofactor>
    <text evidence="1">Binds 3 [4Fe-4S] clusters per subunit.</text>
</comment>
<comment type="subunit">
    <text evidence="1">Composed of 13 different subunits. Subunits NuoCD, E, F, and G constitute the peripheral sector of the complex (By similarity).</text>
</comment>
<comment type="similarity">
    <text evidence="6">Belongs to the complex I 75 kDa subunit family.</text>
</comment>
<reference key="1">
    <citation type="journal article" date="2003" name="Proc. Natl. Acad. Sci. U.S.A.">
        <title>Reductive genome evolution in Buchnera aphidicola.</title>
        <authorList>
            <person name="van Ham R.C.H.J."/>
            <person name="Kamerbeek J."/>
            <person name="Palacios C."/>
            <person name="Rausell C."/>
            <person name="Abascal F."/>
            <person name="Bastolla U."/>
            <person name="Fernandez J.M."/>
            <person name="Jimenez L."/>
            <person name="Postigo M."/>
            <person name="Silva F.J."/>
            <person name="Tamames J."/>
            <person name="Viguera E."/>
            <person name="Latorre A."/>
            <person name="Valencia A."/>
            <person name="Moran F."/>
            <person name="Moya A."/>
        </authorList>
    </citation>
    <scope>NUCLEOTIDE SEQUENCE [LARGE SCALE GENOMIC DNA]</scope>
    <source>
        <strain>Bp</strain>
    </source>
</reference>
<accession>Q89AU1</accession>
<protein>
    <recommendedName>
        <fullName>NADH-quinone oxidoreductase subunit G</fullName>
        <ecNumber>7.1.1.-</ecNumber>
    </recommendedName>
    <alternativeName>
        <fullName>NADH dehydrogenase I subunit G</fullName>
    </alternativeName>
    <alternativeName>
        <fullName>NDH-1 subunit G</fullName>
    </alternativeName>
</protein>
<name>NUOG_BUCBP</name>
<dbReference type="EC" id="7.1.1.-"/>
<dbReference type="EMBL" id="AE016826">
    <property type="protein sequence ID" value="AAO26882.1"/>
    <property type="molecule type" value="Genomic_DNA"/>
</dbReference>
<dbReference type="RefSeq" id="WP_011091283.1">
    <property type="nucleotide sequence ID" value="NC_004545.1"/>
</dbReference>
<dbReference type="SMR" id="Q89AU1"/>
<dbReference type="STRING" id="224915.bbp_148"/>
<dbReference type="KEGG" id="bab:bbp_148"/>
<dbReference type="eggNOG" id="COG1034">
    <property type="taxonomic scope" value="Bacteria"/>
</dbReference>
<dbReference type="HOGENOM" id="CLU_000422_11_4_6"/>
<dbReference type="OrthoDB" id="9810782at2"/>
<dbReference type="Proteomes" id="UP000000601">
    <property type="component" value="Chromosome"/>
</dbReference>
<dbReference type="GO" id="GO:0016020">
    <property type="term" value="C:membrane"/>
    <property type="evidence" value="ECO:0007669"/>
    <property type="project" value="InterPro"/>
</dbReference>
<dbReference type="GO" id="GO:0051537">
    <property type="term" value="F:2 iron, 2 sulfur cluster binding"/>
    <property type="evidence" value="ECO:0007669"/>
    <property type="project" value="UniProtKB-KW"/>
</dbReference>
<dbReference type="GO" id="GO:0051539">
    <property type="term" value="F:4 iron, 4 sulfur cluster binding"/>
    <property type="evidence" value="ECO:0007669"/>
    <property type="project" value="UniProtKB-KW"/>
</dbReference>
<dbReference type="GO" id="GO:0046872">
    <property type="term" value="F:metal ion binding"/>
    <property type="evidence" value="ECO:0007669"/>
    <property type="project" value="UniProtKB-KW"/>
</dbReference>
<dbReference type="GO" id="GO:0008137">
    <property type="term" value="F:NADH dehydrogenase (ubiquinone) activity"/>
    <property type="evidence" value="ECO:0007669"/>
    <property type="project" value="InterPro"/>
</dbReference>
<dbReference type="GO" id="GO:0048038">
    <property type="term" value="F:quinone binding"/>
    <property type="evidence" value="ECO:0007669"/>
    <property type="project" value="UniProtKB-KW"/>
</dbReference>
<dbReference type="GO" id="GO:0042773">
    <property type="term" value="P:ATP synthesis coupled electron transport"/>
    <property type="evidence" value="ECO:0007669"/>
    <property type="project" value="InterPro"/>
</dbReference>
<dbReference type="CDD" id="cd00207">
    <property type="entry name" value="fer2"/>
    <property type="match status" value="1"/>
</dbReference>
<dbReference type="CDD" id="cd02788">
    <property type="entry name" value="MopB_CT_NDH-1_NuoG2-N7"/>
    <property type="match status" value="1"/>
</dbReference>
<dbReference type="CDD" id="cd02771">
    <property type="entry name" value="MopB_NDH-1_NuoG2-N7"/>
    <property type="match status" value="1"/>
</dbReference>
<dbReference type="FunFam" id="3.10.20.740:FF:000002">
    <property type="entry name" value="NADH-quinone oxidoreductase"/>
    <property type="match status" value="1"/>
</dbReference>
<dbReference type="Gene3D" id="3.10.20.740">
    <property type="match status" value="1"/>
</dbReference>
<dbReference type="Gene3D" id="3.30.200.210">
    <property type="match status" value="1"/>
</dbReference>
<dbReference type="Gene3D" id="3.40.50.740">
    <property type="match status" value="1"/>
</dbReference>
<dbReference type="InterPro" id="IPR036010">
    <property type="entry name" value="2Fe-2S_ferredoxin-like_sf"/>
</dbReference>
<dbReference type="InterPro" id="IPR001041">
    <property type="entry name" value="2Fe-2S_ferredoxin-type"/>
</dbReference>
<dbReference type="InterPro" id="IPR006656">
    <property type="entry name" value="Mopterin_OxRdtase"/>
</dbReference>
<dbReference type="InterPro" id="IPR006963">
    <property type="entry name" value="Mopterin_OxRdtase_4Fe-4S_dom"/>
</dbReference>
<dbReference type="InterPro" id="IPR000283">
    <property type="entry name" value="NADH_UbQ_OxRdtase_75kDa_su_CS"/>
</dbReference>
<dbReference type="InterPro" id="IPR054351">
    <property type="entry name" value="NADH_UbQ_OxRdtase_ferredoxin"/>
</dbReference>
<dbReference type="InterPro" id="IPR010228">
    <property type="entry name" value="NADH_UbQ_OxRdtase_Gsu"/>
</dbReference>
<dbReference type="InterPro" id="IPR019574">
    <property type="entry name" value="NADH_UbQ_OxRdtase_Gsu_4Fe4S-bd"/>
</dbReference>
<dbReference type="InterPro" id="IPR050123">
    <property type="entry name" value="Prok_molybdopt-oxidoreductase"/>
</dbReference>
<dbReference type="NCBIfam" id="TIGR01973">
    <property type="entry name" value="NuoG"/>
    <property type="match status" value="1"/>
</dbReference>
<dbReference type="PANTHER" id="PTHR43105:SF10">
    <property type="entry name" value="NADH-QUINONE OXIDOREDUCTASE SUBUNIT G"/>
    <property type="match status" value="1"/>
</dbReference>
<dbReference type="PANTHER" id="PTHR43105">
    <property type="entry name" value="RESPIRATORY NITRATE REDUCTASE"/>
    <property type="match status" value="1"/>
</dbReference>
<dbReference type="Pfam" id="PF13510">
    <property type="entry name" value="Fer2_4"/>
    <property type="match status" value="1"/>
</dbReference>
<dbReference type="Pfam" id="PF22117">
    <property type="entry name" value="Fer4_Nqo3"/>
    <property type="match status" value="1"/>
</dbReference>
<dbReference type="Pfam" id="PF04879">
    <property type="entry name" value="Molybdop_Fe4S4"/>
    <property type="match status" value="1"/>
</dbReference>
<dbReference type="Pfam" id="PF00384">
    <property type="entry name" value="Molybdopterin"/>
    <property type="match status" value="1"/>
</dbReference>
<dbReference type="Pfam" id="PF10588">
    <property type="entry name" value="NADH-G_4Fe-4S_3"/>
    <property type="match status" value="1"/>
</dbReference>
<dbReference type="SMART" id="SM00926">
    <property type="entry name" value="Molybdop_Fe4S4"/>
    <property type="match status" value="1"/>
</dbReference>
<dbReference type="SMART" id="SM00929">
    <property type="entry name" value="NADH-G_4Fe-4S_3"/>
    <property type="match status" value="1"/>
</dbReference>
<dbReference type="SUPFAM" id="SSF54292">
    <property type="entry name" value="2Fe-2S ferredoxin-like"/>
    <property type="match status" value="1"/>
</dbReference>
<dbReference type="SUPFAM" id="SSF54862">
    <property type="entry name" value="4Fe-4S ferredoxins"/>
    <property type="match status" value="1"/>
</dbReference>
<dbReference type="SUPFAM" id="SSF53706">
    <property type="entry name" value="Formate dehydrogenase/DMSO reductase, domains 1-3"/>
    <property type="match status" value="1"/>
</dbReference>
<dbReference type="PROSITE" id="PS51085">
    <property type="entry name" value="2FE2S_FER_2"/>
    <property type="match status" value="1"/>
</dbReference>
<dbReference type="PROSITE" id="PS51839">
    <property type="entry name" value="4FE4S_HC3"/>
    <property type="match status" value="1"/>
</dbReference>
<dbReference type="PROSITE" id="PS51669">
    <property type="entry name" value="4FE4S_MOW_BIS_MGD"/>
    <property type="match status" value="1"/>
</dbReference>
<dbReference type="PROSITE" id="PS00641">
    <property type="entry name" value="COMPLEX1_75K_1"/>
    <property type="match status" value="1"/>
</dbReference>
<dbReference type="PROSITE" id="PS00642">
    <property type="entry name" value="COMPLEX1_75K_2"/>
    <property type="match status" value="1"/>
</dbReference>
<dbReference type="PROSITE" id="PS00643">
    <property type="entry name" value="COMPLEX1_75K_3"/>
    <property type="match status" value="1"/>
</dbReference>
<organism>
    <name type="scientific">Buchnera aphidicola subsp. Baizongia pistaciae (strain Bp)</name>
    <dbReference type="NCBI Taxonomy" id="224915"/>
    <lineage>
        <taxon>Bacteria</taxon>
        <taxon>Pseudomonadati</taxon>
        <taxon>Pseudomonadota</taxon>
        <taxon>Gammaproteobacteria</taxon>
        <taxon>Enterobacterales</taxon>
        <taxon>Erwiniaceae</taxon>
        <taxon>Buchnera</taxon>
    </lineage>
</organism>
<proteinExistence type="inferred from homology"/>
<feature type="chain" id="PRO_0000118544" description="NADH-quinone oxidoreductase subunit G">
    <location>
        <begin position="1"/>
        <end position="907"/>
    </location>
</feature>
<feature type="domain" description="2Fe-2S ferredoxin-type" evidence="3">
    <location>
        <begin position="1"/>
        <end position="83"/>
    </location>
</feature>
<feature type="domain" description="4Fe-4S His(Cys)3-ligated-type" evidence="5">
    <location>
        <begin position="83"/>
        <end position="122"/>
    </location>
</feature>
<feature type="domain" description="4Fe-4S Mo/W bis-MGD-type" evidence="4">
    <location>
        <begin position="221"/>
        <end position="277"/>
    </location>
</feature>
<feature type="binding site" evidence="1">
    <location>
        <position position="34"/>
    </location>
    <ligand>
        <name>[2Fe-2S] cluster</name>
        <dbReference type="ChEBI" id="CHEBI:190135"/>
    </ligand>
</feature>
<feature type="binding site" evidence="1">
    <location>
        <position position="45"/>
    </location>
    <ligand>
        <name>[2Fe-2S] cluster</name>
        <dbReference type="ChEBI" id="CHEBI:190135"/>
    </ligand>
</feature>
<feature type="binding site" evidence="1">
    <location>
        <position position="48"/>
    </location>
    <ligand>
        <name>[2Fe-2S] cluster</name>
        <dbReference type="ChEBI" id="CHEBI:190135"/>
    </ligand>
</feature>
<feature type="binding site" evidence="1">
    <location>
        <position position="67"/>
    </location>
    <ligand>
        <name>[2Fe-2S] cluster</name>
        <dbReference type="ChEBI" id="CHEBI:190135"/>
    </ligand>
</feature>
<feature type="binding site" evidence="5">
    <location>
        <position position="99"/>
    </location>
    <ligand>
        <name>[4Fe-4S] cluster</name>
        <dbReference type="ChEBI" id="CHEBI:49883"/>
        <label>1</label>
    </ligand>
</feature>
<feature type="binding site" evidence="5">
    <location>
        <position position="103"/>
    </location>
    <ligand>
        <name>[4Fe-4S] cluster</name>
        <dbReference type="ChEBI" id="CHEBI:49883"/>
        <label>1</label>
    </ligand>
</feature>
<feature type="binding site" evidence="5">
    <location>
        <position position="106"/>
    </location>
    <ligand>
        <name>[4Fe-4S] cluster</name>
        <dbReference type="ChEBI" id="CHEBI:49883"/>
        <label>1</label>
    </ligand>
</feature>
<feature type="binding site" evidence="5">
    <location>
        <position position="112"/>
    </location>
    <ligand>
        <name>[4Fe-4S] cluster</name>
        <dbReference type="ChEBI" id="CHEBI:49883"/>
        <label>1</label>
    </ligand>
</feature>
<feature type="binding site" evidence="1">
    <location>
        <position position="151"/>
    </location>
    <ligand>
        <name>[4Fe-4S] cluster</name>
        <dbReference type="ChEBI" id="CHEBI:49883"/>
        <label>2</label>
    </ligand>
</feature>
<feature type="binding site" evidence="1">
    <location>
        <position position="154"/>
    </location>
    <ligand>
        <name>[4Fe-4S] cluster</name>
        <dbReference type="ChEBI" id="CHEBI:49883"/>
        <label>2</label>
    </ligand>
</feature>
<feature type="binding site" evidence="1">
    <location>
        <position position="157"/>
    </location>
    <ligand>
        <name>[4Fe-4S] cluster</name>
        <dbReference type="ChEBI" id="CHEBI:49883"/>
        <label>2</label>
    </ligand>
</feature>
<feature type="binding site" evidence="1">
    <location>
        <position position="201"/>
    </location>
    <ligand>
        <name>[4Fe-4S] cluster</name>
        <dbReference type="ChEBI" id="CHEBI:49883"/>
        <label>2</label>
    </ligand>
</feature>
<feature type="binding site" evidence="2">
    <location>
        <position position="228"/>
    </location>
    <ligand>
        <name>[4Fe-4S] cluster</name>
        <dbReference type="ChEBI" id="CHEBI:49883"/>
        <label>3</label>
    </ligand>
</feature>
<feature type="binding site" evidence="2">
    <location>
        <position position="231"/>
    </location>
    <ligand>
        <name>[4Fe-4S] cluster</name>
        <dbReference type="ChEBI" id="CHEBI:49883"/>
        <label>3</label>
    </ligand>
</feature>
<feature type="binding site" evidence="2">
    <location>
        <position position="235"/>
    </location>
    <ligand>
        <name>[4Fe-4S] cluster</name>
        <dbReference type="ChEBI" id="CHEBI:49883"/>
        <label>3</label>
    </ligand>
</feature>
<feature type="binding site" evidence="2">
    <location>
        <position position="263"/>
    </location>
    <ligand>
        <name>[4Fe-4S] cluster</name>
        <dbReference type="ChEBI" id="CHEBI:49883"/>
        <label>3</label>
    </ligand>
</feature>